<name>YBXI_BACSU</name>
<organism>
    <name type="scientific">Bacillus subtilis (strain 168)</name>
    <dbReference type="NCBI Taxonomy" id="224308"/>
    <lineage>
        <taxon>Bacteria</taxon>
        <taxon>Bacillati</taxon>
        <taxon>Bacillota</taxon>
        <taxon>Bacilli</taxon>
        <taxon>Bacillales</taxon>
        <taxon>Bacillaceae</taxon>
        <taxon>Bacillus</taxon>
    </lineage>
</organism>
<evidence type="ECO:0000250" key="1"/>
<evidence type="ECO:0000255" key="2"/>
<evidence type="ECO:0000255" key="3">
    <source>
        <dbReference type="PROSITE-ProRule" id="PRU10103"/>
    </source>
</evidence>
<evidence type="ECO:0000305" key="4"/>
<evidence type="ECO:0007829" key="5">
    <source>
        <dbReference type="PDB" id="5E2F"/>
    </source>
</evidence>
<evidence type="ECO:0007829" key="6">
    <source>
        <dbReference type="PDB" id="6W5F"/>
    </source>
</evidence>
<accession>P54427</accession>
<accession>O31439</accession>
<proteinExistence type="evidence at protein level"/>
<comment type="catalytic activity">
    <reaction evidence="3">
        <text>a beta-lactam + H2O = a substituted beta-amino acid</text>
        <dbReference type="Rhea" id="RHEA:20401"/>
        <dbReference type="ChEBI" id="CHEBI:15377"/>
        <dbReference type="ChEBI" id="CHEBI:35627"/>
        <dbReference type="ChEBI" id="CHEBI:140347"/>
        <dbReference type="EC" id="3.5.2.6"/>
    </reaction>
</comment>
<comment type="similarity">
    <text evidence="4">Belongs to the class-D beta-lactamase family.</text>
</comment>
<gene>
    <name type="primary">ybxI</name>
    <name type="synonym">ybdS</name>
    <name type="ordered locus">BSU02090</name>
</gene>
<keyword id="KW-0002">3D-structure</keyword>
<keyword id="KW-0046">Antibiotic resistance</keyword>
<keyword id="KW-0378">Hydrolase</keyword>
<keyword id="KW-1185">Reference proteome</keyword>
<keyword id="KW-0732">Signal</keyword>
<dbReference type="EC" id="3.5.2.6"/>
<dbReference type="EMBL" id="AB006424">
    <property type="protein sequence ID" value="BAA33106.1"/>
    <property type="molecule type" value="Genomic_DNA"/>
</dbReference>
<dbReference type="EMBL" id="AL009126">
    <property type="protein sequence ID" value="CAB12003.1"/>
    <property type="molecule type" value="Genomic_DNA"/>
</dbReference>
<dbReference type="EMBL" id="X92859">
    <property type="protein sequence ID" value="CAA63445.1"/>
    <property type="molecule type" value="Genomic_DNA"/>
</dbReference>
<dbReference type="PIR" id="B69752">
    <property type="entry name" value="B69752"/>
</dbReference>
<dbReference type="RefSeq" id="NP_388091.1">
    <property type="nucleotide sequence ID" value="NC_000964.3"/>
</dbReference>
<dbReference type="PDB" id="5E2F">
    <property type="method" value="X-ray"/>
    <property type="resolution" value="1.30 A"/>
    <property type="chains" value="A/B=1-267"/>
</dbReference>
<dbReference type="PDB" id="6W5E">
    <property type="method" value="X-ray"/>
    <property type="resolution" value="1.30 A"/>
    <property type="chains" value="A=1-267"/>
</dbReference>
<dbReference type="PDB" id="6W5F">
    <property type="method" value="X-ray"/>
    <property type="resolution" value="1.50 A"/>
    <property type="chains" value="A/B/C/D=1-267"/>
</dbReference>
<dbReference type="PDBsum" id="5E2F"/>
<dbReference type="PDBsum" id="6W5E"/>
<dbReference type="PDBsum" id="6W5F"/>
<dbReference type="SMR" id="P54427"/>
<dbReference type="FunCoup" id="P54427">
    <property type="interactions" value="67"/>
</dbReference>
<dbReference type="STRING" id="224308.BSU02090"/>
<dbReference type="PaxDb" id="224308-BSU02090"/>
<dbReference type="EnsemblBacteria" id="CAB12003">
    <property type="protein sequence ID" value="CAB12003"/>
    <property type="gene ID" value="BSU_02090"/>
</dbReference>
<dbReference type="GeneID" id="938466"/>
<dbReference type="KEGG" id="bsu:BSU02090"/>
<dbReference type="PATRIC" id="fig|224308.179.peg.215"/>
<dbReference type="eggNOG" id="COG2602">
    <property type="taxonomic scope" value="Bacteria"/>
</dbReference>
<dbReference type="InParanoid" id="P54427"/>
<dbReference type="OrthoDB" id="9762883at2"/>
<dbReference type="PhylomeDB" id="P54427"/>
<dbReference type="BioCyc" id="BSUB:BSU02090-MONOMER"/>
<dbReference type="EvolutionaryTrace" id="P54427"/>
<dbReference type="Proteomes" id="UP000001570">
    <property type="component" value="Chromosome"/>
</dbReference>
<dbReference type="GO" id="GO:0005886">
    <property type="term" value="C:plasma membrane"/>
    <property type="evidence" value="ECO:0000318"/>
    <property type="project" value="GO_Central"/>
</dbReference>
<dbReference type="GO" id="GO:0008800">
    <property type="term" value="F:beta-lactamase activity"/>
    <property type="evidence" value="ECO:0007669"/>
    <property type="project" value="UniProtKB-EC"/>
</dbReference>
<dbReference type="GO" id="GO:0008658">
    <property type="term" value="F:penicillin binding"/>
    <property type="evidence" value="ECO:0000318"/>
    <property type="project" value="GO_Central"/>
</dbReference>
<dbReference type="GO" id="GO:0017001">
    <property type="term" value="P:antibiotic catabolic process"/>
    <property type="evidence" value="ECO:0007669"/>
    <property type="project" value="InterPro"/>
</dbReference>
<dbReference type="GO" id="GO:0071555">
    <property type="term" value="P:cell wall organization"/>
    <property type="evidence" value="ECO:0000318"/>
    <property type="project" value="GO_Central"/>
</dbReference>
<dbReference type="GO" id="GO:0046677">
    <property type="term" value="P:response to antibiotic"/>
    <property type="evidence" value="ECO:0007669"/>
    <property type="project" value="UniProtKB-KW"/>
</dbReference>
<dbReference type="Gene3D" id="3.40.710.10">
    <property type="entry name" value="DD-peptidase/beta-lactamase superfamily"/>
    <property type="match status" value="1"/>
</dbReference>
<dbReference type="InterPro" id="IPR050515">
    <property type="entry name" value="Bact_Transpept/Beta-Lactamase"/>
</dbReference>
<dbReference type="InterPro" id="IPR012338">
    <property type="entry name" value="Beta-lactam/transpept-like"/>
</dbReference>
<dbReference type="InterPro" id="IPR002137">
    <property type="entry name" value="Beta-lactam_class-D_AS"/>
</dbReference>
<dbReference type="InterPro" id="IPR001460">
    <property type="entry name" value="PCN-bd_Tpept"/>
</dbReference>
<dbReference type="NCBIfam" id="NF012161">
    <property type="entry name" value="bla_class_D_main"/>
    <property type="match status" value="1"/>
</dbReference>
<dbReference type="PANTHER" id="PTHR30627:SF6">
    <property type="entry name" value="BETA-LACTAMASE YBXI-RELATED"/>
    <property type="match status" value="1"/>
</dbReference>
<dbReference type="PANTHER" id="PTHR30627">
    <property type="entry name" value="PEPTIDOGLYCAN D,D-TRANSPEPTIDASE"/>
    <property type="match status" value="1"/>
</dbReference>
<dbReference type="Pfam" id="PF00905">
    <property type="entry name" value="Transpeptidase"/>
    <property type="match status" value="1"/>
</dbReference>
<dbReference type="SUPFAM" id="SSF56601">
    <property type="entry name" value="beta-lactamase/transpeptidase-like"/>
    <property type="match status" value="1"/>
</dbReference>
<dbReference type="PROSITE" id="PS00337">
    <property type="entry name" value="BETA_LACTAMASE_D"/>
    <property type="match status" value="1"/>
</dbReference>
<feature type="signal peptide" evidence="2">
    <location>
        <begin position="1"/>
        <end position="23"/>
    </location>
</feature>
<feature type="chain" id="PRO_0000017049" description="Probable beta-lactamase YbxI">
    <location>
        <begin position="24"/>
        <end position="267"/>
    </location>
</feature>
<feature type="active site" description="Acyl-ester intermediate" evidence="3">
    <location>
        <position position="76"/>
    </location>
</feature>
<feature type="binding site" evidence="1">
    <location>
        <begin position="214"/>
        <end position="216"/>
    </location>
    <ligand>
        <name>substrate</name>
    </ligand>
</feature>
<feature type="modified residue" description="N6-carboxylysine" evidence="1">
    <location>
        <position position="79"/>
    </location>
</feature>
<feature type="sequence conflict" description="In Ref. 3." evidence="4" ref="3">
    <original>YQALARDIG</original>
    <variation>IISISERYR</variation>
    <location>
        <begin position="129"/>
        <end position="137"/>
    </location>
</feature>
<feature type="sequence conflict" description="In Ref. 3; CAA63445." evidence="4" ref="3">
    <original>T</original>
    <variation>A</variation>
    <location>
        <position position="169"/>
    </location>
</feature>
<feature type="helix" evidence="5">
    <location>
        <begin position="34"/>
        <end position="36"/>
    </location>
</feature>
<feature type="helix" evidence="5">
    <location>
        <begin position="40"/>
        <end position="43"/>
    </location>
</feature>
<feature type="strand" evidence="6">
    <location>
        <begin position="44"/>
        <end position="46"/>
    </location>
</feature>
<feature type="strand" evidence="5">
    <location>
        <begin position="48"/>
        <end position="54"/>
    </location>
</feature>
<feature type="turn" evidence="5">
    <location>
        <begin position="55"/>
        <end position="58"/>
    </location>
</feature>
<feature type="strand" evidence="5">
    <location>
        <begin position="59"/>
        <end position="64"/>
    </location>
</feature>
<feature type="helix" evidence="5">
    <location>
        <begin position="65"/>
        <end position="68"/>
    </location>
</feature>
<feature type="helix" evidence="5">
    <location>
        <begin position="75"/>
        <end position="78"/>
    </location>
</feature>
<feature type="helix" evidence="5">
    <location>
        <begin position="81"/>
        <end position="88"/>
    </location>
</feature>
<feature type="helix" evidence="5">
    <location>
        <begin position="109"/>
        <end position="111"/>
    </location>
</feature>
<feature type="helix" evidence="5">
    <location>
        <begin position="117"/>
        <end position="122"/>
    </location>
</feature>
<feature type="helix" evidence="5">
    <location>
        <begin position="126"/>
        <end position="136"/>
    </location>
</feature>
<feature type="helix" evidence="5">
    <location>
        <begin position="138"/>
        <end position="147"/>
    </location>
</feature>
<feature type="turn" evidence="5">
    <location>
        <begin position="159"/>
        <end position="163"/>
    </location>
</feature>
<feature type="strand" evidence="5">
    <location>
        <begin position="164"/>
        <end position="167"/>
    </location>
</feature>
<feature type="helix" evidence="5">
    <location>
        <begin position="172"/>
        <end position="183"/>
    </location>
</feature>
<feature type="strand" evidence="5">
    <location>
        <begin position="187"/>
        <end position="189"/>
    </location>
</feature>
<feature type="helix" evidence="5">
    <location>
        <begin position="191"/>
        <end position="200"/>
    </location>
</feature>
<feature type="strand" evidence="5">
    <location>
        <begin position="202"/>
        <end position="205"/>
    </location>
</feature>
<feature type="strand" evidence="5">
    <location>
        <begin position="207"/>
        <end position="217"/>
    </location>
</feature>
<feature type="turn" evidence="5">
    <location>
        <begin position="219"/>
        <end position="222"/>
    </location>
</feature>
<feature type="strand" evidence="5">
    <location>
        <begin position="225"/>
        <end position="233"/>
    </location>
</feature>
<feature type="strand" evidence="5">
    <location>
        <begin position="236"/>
        <end position="246"/>
    </location>
</feature>
<feature type="helix" evidence="5">
    <location>
        <begin position="248"/>
        <end position="261"/>
    </location>
</feature>
<sequence length="267" mass="30644">MKKWIYVVLVLSIAGIGGFSVHAASSAHEKHLNVSKMNVDDEFKDTDGTFILHDLQKDQTFVYNRKRANQRQTPQSTFKVVNALIGLQVKAVRDEYDVKRWDGVKREFESWNRDHTLGSAMRESAIWYYQALARDIGEERMKTWLHTLSYGNEDISGGIDQFWLQSSLTISPLEQETFLEKLAKEELPFDKPVMKIVKRMMIQEEGDHYTLYGKTGTRLTDMGLGWFVGFIKTEHGSYVFVTNVDDSGTKAKNITVDILKKYGLITS</sequence>
<protein>
    <recommendedName>
        <fullName>Probable beta-lactamase YbxI</fullName>
        <ecNumber>3.5.2.6</ecNumber>
    </recommendedName>
</protein>
<reference key="1">
    <citation type="submission" date="1997-07" db="EMBL/GenBank/DDBJ databases">
        <title>Sequence analysis of the 70kb region between 17 and 23 degree of the Bacillus subtilis chromosome.</title>
        <authorList>
            <person name="Haga K."/>
            <person name="Liu H."/>
            <person name="Yasumoto K."/>
            <person name="Takahashi H."/>
            <person name="Yoshikawa H."/>
        </authorList>
    </citation>
    <scope>NUCLEOTIDE SEQUENCE [GENOMIC DNA]</scope>
    <source>
        <strain>168</strain>
    </source>
</reference>
<reference key="2">
    <citation type="journal article" date="1997" name="Nature">
        <title>The complete genome sequence of the Gram-positive bacterium Bacillus subtilis.</title>
        <authorList>
            <person name="Kunst F."/>
            <person name="Ogasawara N."/>
            <person name="Moszer I."/>
            <person name="Albertini A.M."/>
            <person name="Alloni G."/>
            <person name="Azevedo V."/>
            <person name="Bertero M.G."/>
            <person name="Bessieres P."/>
            <person name="Bolotin A."/>
            <person name="Borchert S."/>
            <person name="Borriss R."/>
            <person name="Boursier L."/>
            <person name="Brans A."/>
            <person name="Braun M."/>
            <person name="Brignell S.C."/>
            <person name="Bron S."/>
            <person name="Brouillet S."/>
            <person name="Bruschi C.V."/>
            <person name="Caldwell B."/>
            <person name="Capuano V."/>
            <person name="Carter N.M."/>
            <person name="Choi S.-K."/>
            <person name="Codani J.-J."/>
            <person name="Connerton I.F."/>
            <person name="Cummings N.J."/>
            <person name="Daniel R.A."/>
            <person name="Denizot F."/>
            <person name="Devine K.M."/>
            <person name="Duesterhoeft A."/>
            <person name="Ehrlich S.D."/>
            <person name="Emmerson P.T."/>
            <person name="Entian K.-D."/>
            <person name="Errington J."/>
            <person name="Fabret C."/>
            <person name="Ferrari E."/>
            <person name="Foulger D."/>
            <person name="Fritz C."/>
            <person name="Fujita M."/>
            <person name="Fujita Y."/>
            <person name="Fuma S."/>
            <person name="Galizzi A."/>
            <person name="Galleron N."/>
            <person name="Ghim S.-Y."/>
            <person name="Glaser P."/>
            <person name="Goffeau A."/>
            <person name="Golightly E.J."/>
            <person name="Grandi G."/>
            <person name="Guiseppi G."/>
            <person name="Guy B.J."/>
            <person name="Haga K."/>
            <person name="Haiech J."/>
            <person name="Harwood C.R."/>
            <person name="Henaut A."/>
            <person name="Hilbert H."/>
            <person name="Holsappel S."/>
            <person name="Hosono S."/>
            <person name="Hullo M.-F."/>
            <person name="Itaya M."/>
            <person name="Jones L.-M."/>
            <person name="Joris B."/>
            <person name="Karamata D."/>
            <person name="Kasahara Y."/>
            <person name="Klaerr-Blanchard M."/>
            <person name="Klein C."/>
            <person name="Kobayashi Y."/>
            <person name="Koetter P."/>
            <person name="Koningstein G."/>
            <person name="Krogh S."/>
            <person name="Kumano M."/>
            <person name="Kurita K."/>
            <person name="Lapidus A."/>
            <person name="Lardinois S."/>
            <person name="Lauber J."/>
            <person name="Lazarevic V."/>
            <person name="Lee S.-M."/>
            <person name="Levine A."/>
            <person name="Liu H."/>
            <person name="Masuda S."/>
            <person name="Mauel C."/>
            <person name="Medigue C."/>
            <person name="Medina N."/>
            <person name="Mellado R.P."/>
            <person name="Mizuno M."/>
            <person name="Moestl D."/>
            <person name="Nakai S."/>
            <person name="Noback M."/>
            <person name="Noone D."/>
            <person name="O'Reilly M."/>
            <person name="Ogawa K."/>
            <person name="Ogiwara A."/>
            <person name="Oudega B."/>
            <person name="Park S.-H."/>
            <person name="Parro V."/>
            <person name="Pohl T.M."/>
            <person name="Portetelle D."/>
            <person name="Porwollik S."/>
            <person name="Prescott A.M."/>
            <person name="Presecan E."/>
            <person name="Pujic P."/>
            <person name="Purnelle B."/>
            <person name="Rapoport G."/>
            <person name="Rey M."/>
            <person name="Reynolds S."/>
            <person name="Rieger M."/>
            <person name="Rivolta C."/>
            <person name="Rocha E."/>
            <person name="Roche B."/>
            <person name="Rose M."/>
            <person name="Sadaie Y."/>
            <person name="Sato T."/>
            <person name="Scanlan E."/>
            <person name="Schleich S."/>
            <person name="Schroeter R."/>
            <person name="Scoffone F."/>
            <person name="Sekiguchi J."/>
            <person name="Sekowska A."/>
            <person name="Seror S.J."/>
            <person name="Serror P."/>
            <person name="Shin B.-S."/>
            <person name="Soldo B."/>
            <person name="Sorokin A."/>
            <person name="Tacconi E."/>
            <person name="Takagi T."/>
            <person name="Takahashi H."/>
            <person name="Takemaru K."/>
            <person name="Takeuchi M."/>
            <person name="Tamakoshi A."/>
            <person name="Tanaka T."/>
            <person name="Terpstra P."/>
            <person name="Tognoni A."/>
            <person name="Tosato V."/>
            <person name="Uchiyama S."/>
            <person name="Vandenbol M."/>
            <person name="Vannier F."/>
            <person name="Vassarotti A."/>
            <person name="Viari A."/>
            <person name="Wambutt R."/>
            <person name="Wedler E."/>
            <person name="Wedler H."/>
            <person name="Weitzenegger T."/>
            <person name="Winters P."/>
            <person name="Wipat A."/>
            <person name="Yamamoto H."/>
            <person name="Yamane K."/>
            <person name="Yasumoto K."/>
            <person name="Yata K."/>
            <person name="Yoshida K."/>
            <person name="Yoshikawa H.-F."/>
            <person name="Zumstein E."/>
            <person name="Yoshikawa H."/>
            <person name="Danchin A."/>
        </authorList>
    </citation>
    <scope>NUCLEOTIDE SEQUENCE [LARGE SCALE GENOMIC DNA]</scope>
    <source>
        <strain>168</strain>
    </source>
</reference>
<reference key="3">
    <citation type="journal article" date="1997" name="Gene">
        <title>Characterization of csgA, a new member of the forespore-expressed sigmaG-regulon from Bacillus subtilis.</title>
        <authorList>
            <person name="Shcheptov M."/>
            <person name="Chyu G."/>
            <person name="Bagyan I."/>
            <person name="Cutting S.M."/>
        </authorList>
    </citation>
    <scope>NUCLEOTIDE SEQUENCE [GENOMIC DNA] OF 129-267</scope>
    <source>
        <strain>168 / PY79</strain>
    </source>
</reference>